<feature type="chain" id="PRO_0000075760" description="Insulin gene enhancer protein ISL-3">
    <location>
        <begin position="1"/>
        <end position="363"/>
    </location>
</feature>
<feature type="domain" description="LIM zinc-binding 1" evidence="2">
    <location>
        <begin position="27"/>
        <end position="80"/>
    </location>
</feature>
<feature type="domain" description="LIM zinc-binding 2" evidence="2">
    <location>
        <begin position="89"/>
        <end position="143"/>
    </location>
</feature>
<feature type="DNA-binding region" description="Homeobox" evidence="1">
    <location>
        <begin position="191"/>
        <end position="250"/>
    </location>
</feature>
<feature type="region of interest" description="Disordered" evidence="3">
    <location>
        <begin position="328"/>
        <end position="363"/>
    </location>
</feature>
<feature type="compositionally biased region" description="Low complexity" evidence="3">
    <location>
        <begin position="329"/>
        <end position="340"/>
    </location>
</feature>
<feature type="compositionally biased region" description="Polar residues" evidence="3">
    <location>
        <begin position="341"/>
        <end position="363"/>
    </location>
</feature>
<keyword id="KW-0217">Developmental protein</keyword>
<keyword id="KW-0238">DNA-binding</keyword>
<keyword id="KW-0371">Homeobox</keyword>
<keyword id="KW-0440">LIM domain</keyword>
<keyword id="KW-0479">Metal-binding</keyword>
<keyword id="KW-0539">Nucleus</keyword>
<keyword id="KW-1185">Reference proteome</keyword>
<keyword id="KW-0677">Repeat</keyword>
<keyword id="KW-0862">Zinc</keyword>
<gene>
    <name type="primary">isl3</name>
</gene>
<proteinExistence type="evidence at transcript level"/>
<accession>P53409</accession>
<protein>
    <recommendedName>
        <fullName>Insulin gene enhancer protein ISL-3</fullName>
        <shortName>Islet-3</shortName>
    </recommendedName>
</protein>
<organism>
    <name type="scientific">Oncorhynchus tshawytscha</name>
    <name type="common">Chinook salmon</name>
    <name type="synonym">Salmo tshawytscha</name>
    <dbReference type="NCBI Taxonomy" id="74940"/>
    <lineage>
        <taxon>Eukaryota</taxon>
        <taxon>Metazoa</taxon>
        <taxon>Chordata</taxon>
        <taxon>Craniata</taxon>
        <taxon>Vertebrata</taxon>
        <taxon>Euteleostomi</taxon>
        <taxon>Actinopterygii</taxon>
        <taxon>Neopterygii</taxon>
        <taxon>Teleostei</taxon>
        <taxon>Protacanthopterygii</taxon>
        <taxon>Salmoniformes</taxon>
        <taxon>Salmonidae</taxon>
        <taxon>Salmoninae</taxon>
        <taxon>Oncorhynchus</taxon>
    </lineage>
</organism>
<reference key="1">
    <citation type="journal article" date="1995" name="J. Biol. Chem.">
        <title>Presence of isl-1-related LIM domain homeobox genes in teleost and their similar patterns of expression in brain and spinal cord.</title>
        <authorList>
            <person name="Gong Z."/>
            <person name="Hui C.-C."/>
            <person name="Hew C.-L."/>
        </authorList>
    </citation>
    <scope>NUCLEOTIDE SEQUENCE [MRNA]</scope>
    <source>
        <tissue>Pituitary</tissue>
    </source>
</reference>
<reference key="2">
    <citation type="journal article" date="1995" name="Biochim. Biophys. Acta">
        <title>Several splicing variants of isl-1 like genes in the chinook salmon (Oncorhynchus tschawytscha) encode truncated transcription factors containing a complete LIM domain.</title>
        <authorList>
            <person name="Gong Z."/>
            <person name="Hew C.-L."/>
        </authorList>
    </citation>
    <scope>NUCLEOTIDE SEQUENCE [MRNA]</scope>
    <source>
        <tissue>Pituitary</tissue>
    </source>
</reference>
<comment type="function">
    <text>Binds to one of the cis-acting domain of the insulin gene enhancer. May be involved in subtype specialization of primary motoneurons.</text>
</comment>
<comment type="subcellular location">
    <subcellularLocation>
        <location>Nucleus</location>
    </subcellularLocation>
</comment>
<sequence length="363" mass="40799">MVDIIFNSSFLGDMGDHSKKKSGFAMCVGCGSQIHDQYILRVSPDLEWHAACLKCAECSQYLDETCTCFVRDGKTYCKRDYVRLFGIKCAKCNLGFSSSDLVMRARDNVYHIECFRCSVCSRQLLPGDEFSLRDEELLCRADHSLLMERTSAGSPISPGHIHSNRSLHLAAEPVTVRAPHRNHVHKQSEKTTRVRTVLNEKQLHTLRTCYNANPRPDALMREQLVEMTGLSPRVIRVWFQNKRCKDKKRSILMKQLQQQQHSDKTVSIFSLQGLTGTPLVARSPIRHDNTVQGNSVEVQTYQPPWKALSEFALQSDLDQPAFQQLVPFSESGSLGNSSGSDVTSLSSHLPDTPNSMVPSPVET</sequence>
<name>ISL3_ONCTS</name>
<evidence type="ECO:0000255" key="1">
    <source>
        <dbReference type="PROSITE-ProRule" id="PRU00108"/>
    </source>
</evidence>
<evidence type="ECO:0000255" key="2">
    <source>
        <dbReference type="PROSITE-ProRule" id="PRU00125"/>
    </source>
</evidence>
<evidence type="ECO:0000256" key="3">
    <source>
        <dbReference type="SAM" id="MobiDB-lite"/>
    </source>
</evidence>
<dbReference type="EMBL" id="X64883">
    <property type="status" value="NOT_ANNOTATED_CDS"/>
    <property type="molecule type" value="mRNA"/>
</dbReference>
<dbReference type="PIR" id="C55973">
    <property type="entry name" value="C55973"/>
</dbReference>
<dbReference type="SMR" id="P53409"/>
<dbReference type="Proteomes" id="UP000694402">
    <property type="component" value="Unplaced"/>
</dbReference>
<dbReference type="GO" id="GO:0005634">
    <property type="term" value="C:nucleus"/>
    <property type="evidence" value="ECO:0007669"/>
    <property type="project" value="UniProtKB-SubCell"/>
</dbReference>
<dbReference type="GO" id="GO:0000987">
    <property type="term" value="F:cis-regulatory region sequence-specific DNA binding"/>
    <property type="evidence" value="ECO:0007669"/>
    <property type="project" value="TreeGrafter"/>
</dbReference>
<dbReference type="GO" id="GO:0000981">
    <property type="term" value="F:DNA-binding transcription factor activity, RNA polymerase II-specific"/>
    <property type="evidence" value="ECO:0007669"/>
    <property type="project" value="InterPro"/>
</dbReference>
<dbReference type="GO" id="GO:0046872">
    <property type="term" value="F:metal ion binding"/>
    <property type="evidence" value="ECO:0007669"/>
    <property type="project" value="UniProtKB-KW"/>
</dbReference>
<dbReference type="GO" id="GO:0007409">
    <property type="term" value="P:axonogenesis"/>
    <property type="evidence" value="ECO:0007669"/>
    <property type="project" value="TreeGrafter"/>
</dbReference>
<dbReference type="GO" id="GO:0048665">
    <property type="term" value="P:neuron fate specification"/>
    <property type="evidence" value="ECO:0007669"/>
    <property type="project" value="InterPro"/>
</dbReference>
<dbReference type="GO" id="GO:0045944">
    <property type="term" value="P:positive regulation of transcription by RNA polymerase II"/>
    <property type="evidence" value="ECO:0007669"/>
    <property type="project" value="InterPro"/>
</dbReference>
<dbReference type="CDD" id="cd00086">
    <property type="entry name" value="homeodomain"/>
    <property type="match status" value="1"/>
</dbReference>
<dbReference type="CDD" id="cd09366">
    <property type="entry name" value="LIM1_Isl"/>
    <property type="match status" value="1"/>
</dbReference>
<dbReference type="CDD" id="cd09374">
    <property type="entry name" value="LIM2_Isl"/>
    <property type="match status" value="1"/>
</dbReference>
<dbReference type="FunFam" id="2.10.110.10:FF:000034">
    <property type="entry name" value="Insulin gene enhancer protein ISL"/>
    <property type="match status" value="1"/>
</dbReference>
<dbReference type="FunFam" id="1.10.10.60:FF:000041">
    <property type="entry name" value="insulin gene enhancer protein ISL-1"/>
    <property type="match status" value="1"/>
</dbReference>
<dbReference type="FunFam" id="2.10.110.10:FF:000068">
    <property type="entry name" value="Insulin gene enhancer protein ISL-2"/>
    <property type="match status" value="1"/>
</dbReference>
<dbReference type="Gene3D" id="2.10.110.10">
    <property type="entry name" value="Cysteine Rich Protein"/>
    <property type="match status" value="2"/>
</dbReference>
<dbReference type="Gene3D" id="1.10.10.60">
    <property type="entry name" value="Homeodomain-like"/>
    <property type="match status" value="1"/>
</dbReference>
<dbReference type="InterPro" id="IPR001356">
    <property type="entry name" value="HD"/>
</dbReference>
<dbReference type="InterPro" id="IPR017970">
    <property type="entry name" value="Homeobox_CS"/>
</dbReference>
<dbReference type="InterPro" id="IPR009057">
    <property type="entry name" value="Homeodomain-like_sf"/>
</dbReference>
<dbReference type="InterPro" id="IPR047169">
    <property type="entry name" value="ISL1/2-like"/>
</dbReference>
<dbReference type="InterPro" id="IPR047244">
    <property type="entry name" value="ISL1/2-like_LIM1"/>
</dbReference>
<dbReference type="InterPro" id="IPR001781">
    <property type="entry name" value="Znf_LIM"/>
</dbReference>
<dbReference type="PANTHER" id="PTHR24204">
    <property type="entry name" value="INSULIN GENE ENHANCER PROTEIN"/>
    <property type="match status" value="1"/>
</dbReference>
<dbReference type="PANTHER" id="PTHR24204:SF2">
    <property type="entry name" value="INSULIN GENE ENHANCER PROTEIN ISL-2"/>
    <property type="match status" value="1"/>
</dbReference>
<dbReference type="Pfam" id="PF00046">
    <property type="entry name" value="Homeodomain"/>
    <property type="match status" value="1"/>
</dbReference>
<dbReference type="Pfam" id="PF00412">
    <property type="entry name" value="LIM"/>
    <property type="match status" value="2"/>
</dbReference>
<dbReference type="SMART" id="SM00389">
    <property type="entry name" value="HOX"/>
    <property type="match status" value="1"/>
</dbReference>
<dbReference type="SMART" id="SM00132">
    <property type="entry name" value="LIM"/>
    <property type="match status" value="2"/>
</dbReference>
<dbReference type="SUPFAM" id="SSF57716">
    <property type="entry name" value="Glucocorticoid receptor-like (DNA-binding domain)"/>
    <property type="match status" value="2"/>
</dbReference>
<dbReference type="SUPFAM" id="SSF46689">
    <property type="entry name" value="Homeodomain-like"/>
    <property type="match status" value="1"/>
</dbReference>
<dbReference type="PROSITE" id="PS00027">
    <property type="entry name" value="HOMEOBOX_1"/>
    <property type="match status" value="1"/>
</dbReference>
<dbReference type="PROSITE" id="PS50071">
    <property type="entry name" value="HOMEOBOX_2"/>
    <property type="match status" value="1"/>
</dbReference>
<dbReference type="PROSITE" id="PS00478">
    <property type="entry name" value="LIM_DOMAIN_1"/>
    <property type="match status" value="2"/>
</dbReference>
<dbReference type="PROSITE" id="PS50023">
    <property type="entry name" value="LIM_DOMAIN_2"/>
    <property type="match status" value="2"/>
</dbReference>